<proteinExistence type="evidence at protein level"/>
<gene>
    <name evidence="8" type="primary">sun</name>
    <name evidence="8" type="ORF">CG9032</name>
</gene>
<reference evidence="9" key="1">
    <citation type="journal article" date="2000" name="Science">
        <title>The genome sequence of Drosophila melanogaster.</title>
        <authorList>
            <person name="Adams M.D."/>
            <person name="Celniker S.E."/>
            <person name="Holt R.A."/>
            <person name="Evans C.A."/>
            <person name="Gocayne J.D."/>
            <person name="Amanatides P.G."/>
            <person name="Scherer S.E."/>
            <person name="Li P.W."/>
            <person name="Hoskins R.A."/>
            <person name="Galle R.F."/>
            <person name="George R.A."/>
            <person name="Lewis S.E."/>
            <person name="Richards S."/>
            <person name="Ashburner M."/>
            <person name="Henderson S.N."/>
            <person name="Sutton G.G."/>
            <person name="Wortman J.R."/>
            <person name="Yandell M.D."/>
            <person name="Zhang Q."/>
            <person name="Chen L.X."/>
            <person name="Brandon R.C."/>
            <person name="Rogers Y.-H.C."/>
            <person name="Blazej R.G."/>
            <person name="Champe M."/>
            <person name="Pfeiffer B.D."/>
            <person name="Wan K.H."/>
            <person name="Doyle C."/>
            <person name="Baxter E.G."/>
            <person name="Helt G."/>
            <person name="Nelson C.R."/>
            <person name="Miklos G.L.G."/>
            <person name="Abril J.F."/>
            <person name="Agbayani A."/>
            <person name="An H.-J."/>
            <person name="Andrews-Pfannkoch C."/>
            <person name="Baldwin D."/>
            <person name="Ballew R.M."/>
            <person name="Basu A."/>
            <person name="Baxendale J."/>
            <person name="Bayraktaroglu L."/>
            <person name="Beasley E.M."/>
            <person name="Beeson K.Y."/>
            <person name="Benos P.V."/>
            <person name="Berman B.P."/>
            <person name="Bhandari D."/>
            <person name="Bolshakov S."/>
            <person name="Borkova D."/>
            <person name="Botchan M.R."/>
            <person name="Bouck J."/>
            <person name="Brokstein P."/>
            <person name="Brottier P."/>
            <person name="Burtis K.C."/>
            <person name="Busam D.A."/>
            <person name="Butler H."/>
            <person name="Cadieu E."/>
            <person name="Center A."/>
            <person name="Chandra I."/>
            <person name="Cherry J.M."/>
            <person name="Cawley S."/>
            <person name="Dahlke C."/>
            <person name="Davenport L.B."/>
            <person name="Davies P."/>
            <person name="de Pablos B."/>
            <person name="Delcher A."/>
            <person name="Deng Z."/>
            <person name="Mays A.D."/>
            <person name="Dew I."/>
            <person name="Dietz S.M."/>
            <person name="Dodson K."/>
            <person name="Doup L.E."/>
            <person name="Downes M."/>
            <person name="Dugan-Rocha S."/>
            <person name="Dunkov B.C."/>
            <person name="Dunn P."/>
            <person name="Durbin K.J."/>
            <person name="Evangelista C.C."/>
            <person name="Ferraz C."/>
            <person name="Ferriera S."/>
            <person name="Fleischmann W."/>
            <person name="Fosler C."/>
            <person name="Gabrielian A.E."/>
            <person name="Garg N.S."/>
            <person name="Gelbart W.M."/>
            <person name="Glasser K."/>
            <person name="Glodek A."/>
            <person name="Gong F."/>
            <person name="Gorrell J.H."/>
            <person name="Gu Z."/>
            <person name="Guan P."/>
            <person name="Harris M."/>
            <person name="Harris N.L."/>
            <person name="Harvey D.A."/>
            <person name="Heiman T.J."/>
            <person name="Hernandez J.R."/>
            <person name="Houck J."/>
            <person name="Hostin D."/>
            <person name="Houston K.A."/>
            <person name="Howland T.J."/>
            <person name="Wei M.-H."/>
            <person name="Ibegwam C."/>
            <person name="Jalali M."/>
            <person name="Kalush F."/>
            <person name="Karpen G.H."/>
            <person name="Ke Z."/>
            <person name="Kennison J.A."/>
            <person name="Ketchum K.A."/>
            <person name="Kimmel B.E."/>
            <person name="Kodira C.D."/>
            <person name="Kraft C.L."/>
            <person name="Kravitz S."/>
            <person name="Kulp D."/>
            <person name="Lai Z."/>
            <person name="Lasko P."/>
            <person name="Lei Y."/>
            <person name="Levitsky A.A."/>
            <person name="Li J.H."/>
            <person name="Li Z."/>
            <person name="Liang Y."/>
            <person name="Lin X."/>
            <person name="Liu X."/>
            <person name="Mattei B."/>
            <person name="McIntosh T.C."/>
            <person name="McLeod M.P."/>
            <person name="McPherson D."/>
            <person name="Merkulov G."/>
            <person name="Milshina N.V."/>
            <person name="Mobarry C."/>
            <person name="Morris J."/>
            <person name="Moshrefi A."/>
            <person name="Mount S.M."/>
            <person name="Moy M."/>
            <person name="Murphy B."/>
            <person name="Murphy L."/>
            <person name="Muzny D.M."/>
            <person name="Nelson D.L."/>
            <person name="Nelson D.R."/>
            <person name="Nelson K.A."/>
            <person name="Nixon K."/>
            <person name="Nusskern D.R."/>
            <person name="Pacleb J.M."/>
            <person name="Palazzolo M."/>
            <person name="Pittman G.S."/>
            <person name="Pan S."/>
            <person name="Pollard J."/>
            <person name="Puri V."/>
            <person name="Reese M.G."/>
            <person name="Reinert K."/>
            <person name="Remington K."/>
            <person name="Saunders R.D.C."/>
            <person name="Scheeler F."/>
            <person name="Shen H."/>
            <person name="Shue B.C."/>
            <person name="Siden-Kiamos I."/>
            <person name="Simpson M."/>
            <person name="Skupski M.P."/>
            <person name="Smith T.J."/>
            <person name="Spier E."/>
            <person name="Spradling A.C."/>
            <person name="Stapleton M."/>
            <person name="Strong R."/>
            <person name="Sun E."/>
            <person name="Svirskas R."/>
            <person name="Tector C."/>
            <person name="Turner R."/>
            <person name="Venter E."/>
            <person name="Wang A.H."/>
            <person name="Wang X."/>
            <person name="Wang Z.-Y."/>
            <person name="Wassarman D.A."/>
            <person name="Weinstock G.M."/>
            <person name="Weissenbach J."/>
            <person name="Williams S.M."/>
            <person name="Woodage T."/>
            <person name="Worley K.C."/>
            <person name="Wu D."/>
            <person name="Yang S."/>
            <person name="Yao Q.A."/>
            <person name="Ye J."/>
            <person name="Yeh R.-F."/>
            <person name="Zaveri J.S."/>
            <person name="Zhan M."/>
            <person name="Zhang G."/>
            <person name="Zhao Q."/>
            <person name="Zheng L."/>
            <person name="Zheng X.H."/>
            <person name="Zhong F.N."/>
            <person name="Zhong W."/>
            <person name="Zhou X."/>
            <person name="Zhu S.C."/>
            <person name="Zhu X."/>
            <person name="Smith H.O."/>
            <person name="Gibbs R.A."/>
            <person name="Myers E.W."/>
            <person name="Rubin G.M."/>
            <person name="Venter J.C."/>
        </authorList>
    </citation>
    <scope>NUCLEOTIDE SEQUENCE [LARGE SCALE GENOMIC DNA]</scope>
    <source>
        <strain evidence="9">Berkeley</strain>
    </source>
</reference>
<reference evidence="9" key="2">
    <citation type="journal article" date="2002" name="Genome Biol.">
        <title>Annotation of the Drosophila melanogaster euchromatic genome: a systematic review.</title>
        <authorList>
            <person name="Misra S."/>
            <person name="Crosby M.A."/>
            <person name="Mungall C.J."/>
            <person name="Matthews B.B."/>
            <person name="Campbell K.S."/>
            <person name="Hradecky P."/>
            <person name="Huang Y."/>
            <person name="Kaminker J.S."/>
            <person name="Millburn G.H."/>
            <person name="Prochnik S.E."/>
            <person name="Smith C.D."/>
            <person name="Tupy J.L."/>
            <person name="Whitfield E.J."/>
            <person name="Bayraktaroglu L."/>
            <person name="Berman B.P."/>
            <person name="Bettencourt B.R."/>
            <person name="Celniker S.E."/>
            <person name="de Grey A.D.N.J."/>
            <person name="Drysdale R.A."/>
            <person name="Harris N.L."/>
            <person name="Richter J."/>
            <person name="Russo S."/>
            <person name="Schroeder A.J."/>
            <person name="Shu S.Q."/>
            <person name="Stapleton M."/>
            <person name="Yamada C."/>
            <person name="Ashburner M."/>
            <person name="Gelbart W.M."/>
            <person name="Rubin G.M."/>
            <person name="Lewis S.E."/>
        </authorList>
    </citation>
    <scope>GENOME REANNOTATION</scope>
    <source>
        <strain evidence="9">Berkeley</strain>
    </source>
</reference>
<reference evidence="4" key="3">
    <citation type="journal article" date="2002" name="Genome Biol.">
        <title>A Drosophila full-length cDNA resource.</title>
        <authorList>
            <person name="Stapleton M."/>
            <person name="Carlson J.W."/>
            <person name="Brokstein P."/>
            <person name="Yu C."/>
            <person name="Champe M."/>
            <person name="George R.A."/>
            <person name="Guarin H."/>
            <person name="Kronmiller B."/>
            <person name="Pacleb J.M."/>
            <person name="Park S."/>
            <person name="Wan K.H."/>
            <person name="Rubin G.M."/>
            <person name="Celniker S.E."/>
        </authorList>
    </citation>
    <scope>NUCLEOTIDE SEQUENCE [LARGE SCALE MRNA] (ISOFORM A)</scope>
    <source>
        <strain evidence="4">Berkeley</strain>
        <tissue evidence="4">Embryo</tissue>
        <tissue evidence="5">Head</tissue>
    </source>
</reference>
<reference evidence="6" key="4">
    <citation type="submission" date="2009-09" db="EMBL/GenBank/DDBJ databases">
        <authorList>
            <person name="Carlson J."/>
            <person name="Booth B."/>
            <person name="Frise E."/>
            <person name="Park S."/>
            <person name="Wan K."/>
            <person name="Yu C."/>
            <person name="Celniker S."/>
        </authorList>
    </citation>
    <scope>NUCLEOTIDE SEQUENCE [LARGE SCALE MRNA] (ISOFORM B)</scope>
    <source>
        <strain evidence="6">Berkeley</strain>
    </source>
</reference>
<reference key="5">
    <citation type="submission" date="2016-08" db="EMBL/GenBank/DDBJ databases">
        <authorList>
            <person name="Wan K."/>
            <person name="Booth B."/>
            <person name="Spirohn K."/>
            <person name="Hao T."/>
            <person name="Hu Y."/>
            <person name="Calderwood M."/>
            <person name="Hill D."/>
            <person name="Mohr S."/>
            <person name="Vidal M."/>
            <person name="Celniker S."/>
            <person name="Perrimon N."/>
        </authorList>
    </citation>
    <scope>NUCLEOTIDE SEQUENCE [LARGE SCALE MRNA] (ISOFORM A)</scope>
    <source>
        <strain evidence="7">Berkeley</strain>
        <tissue evidence="7">Embryo</tissue>
    </source>
</reference>
<reference key="6">
    <citation type="journal article" date="2004" name="Nat. Cell Biol.">
        <title>The endogenous ligand Stunted of the GPCR Methuselah extends lifespan in Drosophila.</title>
        <authorList>
            <person name="Cvejic S."/>
            <person name="Zhu Z."/>
            <person name="Felice S.J."/>
            <person name="Berman Y."/>
            <person name="Huang X.Y."/>
        </authorList>
    </citation>
    <scope>FUNCTION</scope>
    <scope>DISRUPTION PHENOTYPE</scope>
    <scope>IDENTIFICATION BY MASS SPECTROMETRY (ISOFORMS A AND B)</scope>
</reference>
<reference key="7">
    <citation type="journal article" date="2009" name="Protein Sci.">
        <title>The Drosophila G protein-coupled receptor, Methuselah, exhibits a promiscuous response to peptides.</title>
        <authorList>
            <person name="Ja W.W."/>
            <person name="Carvalho G.B."/>
            <person name="Madrigal M."/>
            <person name="Roberts R.W."/>
            <person name="Benzer S."/>
        </authorList>
    </citation>
    <scope>FUNCTION</scope>
    <scope>MUTAGENESIS OF ALA-3; TRP-4 AND ALA-6</scope>
</reference>
<accession>Q9VXN2</accession>
<accession>Q8IR24</accession>
<keyword id="KW-0025">Alternative splicing</keyword>
<keyword id="KW-1185">Reference proteome</keyword>
<sequence length="61" mass="6791">MTAWRAAGITYIQYSNIAARILRESLKTGLRADAAKRDASHVKFTPWANGKPAQRQTQSES</sequence>
<dbReference type="EMBL" id="AE014298">
    <property type="protein sequence ID" value="AAF48526.1"/>
    <property type="molecule type" value="Genomic_DNA"/>
</dbReference>
<dbReference type="EMBL" id="AE014298">
    <property type="protein sequence ID" value="AAN09369.1"/>
    <property type="molecule type" value="Genomic_DNA"/>
</dbReference>
<dbReference type="EMBL" id="AY071158">
    <property type="protein sequence ID" value="AAL48780.1"/>
    <property type="molecule type" value="mRNA"/>
</dbReference>
<dbReference type="EMBL" id="AY071744">
    <property type="protein sequence ID" value="AAL49366.1"/>
    <property type="molecule type" value="mRNA"/>
</dbReference>
<dbReference type="EMBL" id="BT099753">
    <property type="protein sequence ID" value="ACV82452.1"/>
    <property type="molecule type" value="mRNA"/>
</dbReference>
<dbReference type="EMBL" id="KX531597">
    <property type="protein sequence ID" value="ANY27747.1"/>
    <property type="molecule type" value="mRNA"/>
</dbReference>
<dbReference type="RefSeq" id="NP_524682.1">
    <molecule id="Q9VXN2-1"/>
    <property type="nucleotide sequence ID" value="NM_079943.4"/>
</dbReference>
<dbReference type="RefSeq" id="NP_727905.1">
    <molecule id="Q9VXN2-2"/>
    <property type="nucleotide sequence ID" value="NM_167468.3"/>
</dbReference>
<dbReference type="SMR" id="Q9VXN2"/>
<dbReference type="ComplexPortal" id="CPX-8618">
    <property type="entry name" value="Mitochondrial proton-transporting ATP synthase complex"/>
</dbReference>
<dbReference type="FunCoup" id="Q9VXN2">
    <property type="interactions" value="911"/>
</dbReference>
<dbReference type="IntAct" id="Q9VXN2">
    <property type="interactions" value="105"/>
</dbReference>
<dbReference type="STRING" id="7227.FBpp0073963"/>
<dbReference type="PaxDb" id="7227-FBpp0073963"/>
<dbReference type="DNASU" id="44046"/>
<dbReference type="EnsemblMetazoa" id="FBtr0074176">
    <molecule id="Q9VXN2-1"/>
    <property type="protein sequence ID" value="FBpp0073963"/>
    <property type="gene ID" value="FBgn0014391"/>
</dbReference>
<dbReference type="EnsemblMetazoa" id="FBtr0074177">
    <molecule id="Q9VXN2-2"/>
    <property type="protein sequence ID" value="FBpp0073964"/>
    <property type="gene ID" value="FBgn0014391"/>
</dbReference>
<dbReference type="GeneID" id="44046"/>
<dbReference type="KEGG" id="dme:Dmel_CG9032"/>
<dbReference type="UCSC" id="CG9032-RA">
    <molecule id="Q9VXN2-1"/>
    <property type="organism name" value="d. melanogaster"/>
</dbReference>
<dbReference type="UCSC" id="CG9032-RB">
    <property type="organism name" value="d. melanogaster"/>
</dbReference>
<dbReference type="AGR" id="FB:FBgn0014391"/>
<dbReference type="CTD" id="44046"/>
<dbReference type="FlyBase" id="FBgn0014391">
    <property type="gene designation" value="sun"/>
</dbReference>
<dbReference type="VEuPathDB" id="VectorBase:FBgn0014391"/>
<dbReference type="eggNOG" id="KOG3495">
    <property type="taxonomic scope" value="Eukaryota"/>
</dbReference>
<dbReference type="GeneTree" id="ENSGT00700000106200"/>
<dbReference type="HOGENOM" id="CLU_187039_3_1_1"/>
<dbReference type="InParanoid" id="Q9VXN2"/>
<dbReference type="OMA" id="HIRITKW"/>
<dbReference type="OrthoDB" id="269124at2759"/>
<dbReference type="PhylomeDB" id="Q9VXN2"/>
<dbReference type="Reactome" id="R-DME-163210">
    <property type="pathway name" value="Formation of ATP by chemiosmotic coupling"/>
</dbReference>
<dbReference type="Reactome" id="R-DME-8949613">
    <property type="pathway name" value="Cristae formation"/>
</dbReference>
<dbReference type="BioGRID-ORCS" id="44046">
    <property type="hits" value="0 hits in 3 CRISPR screens"/>
</dbReference>
<dbReference type="ChiTaRS" id="sun">
    <property type="organism name" value="fly"/>
</dbReference>
<dbReference type="GenomeRNAi" id="44046"/>
<dbReference type="PRO" id="PR:Q9VXN2"/>
<dbReference type="Proteomes" id="UP000000803">
    <property type="component" value="Chromosome X"/>
</dbReference>
<dbReference type="Bgee" id="FBgn0014391">
    <property type="expression patterns" value="Expressed in dorsal cluster neuron (Drosophila) in brain and 275 other cell types or tissues"/>
</dbReference>
<dbReference type="ExpressionAtlas" id="Q9VXN2">
    <property type="expression patterns" value="baseline and differential"/>
</dbReference>
<dbReference type="GO" id="GO:0005615">
    <property type="term" value="C:extracellular space"/>
    <property type="evidence" value="ECO:0000314"/>
    <property type="project" value="FlyBase"/>
</dbReference>
<dbReference type="GO" id="GO:0005743">
    <property type="term" value="C:mitochondrial inner membrane"/>
    <property type="evidence" value="ECO:0000318"/>
    <property type="project" value="GO_Central"/>
</dbReference>
<dbReference type="GO" id="GO:0045259">
    <property type="term" value="C:proton-transporting ATP synthase complex"/>
    <property type="evidence" value="ECO:0000250"/>
    <property type="project" value="FlyBase"/>
</dbReference>
<dbReference type="GO" id="GO:0001664">
    <property type="term" value="F:G protein-coupled receptor binding"/>
    <property type="evidence" value="ECO:0000353"/>
    <property type="project" value="FlyBase"/>
</dbReference>
<dbReference type="GO" id="GO:0046933">
    <property type="term" value="F:proton-transporting ATP synthase activity, rotational mechanism"/>
    <property type="evidence" value="ECO:0007669"/>
    <property type="project" value="InterPro"/>
</dbReference>
<dbReference type="GO" id="GO:0008340">
    <property type="term" value="P:determination of adult lifespan"/>
    <property type="evidence" value="ECO:0000315"/>
    <property type="project" value="FlyBase"/>
</dbReference>
<dbReference type="GO" id="GO:0045745">
    <property type="term" value="P:positive regulation of G protein-coupled receptor signaling pathway"/>
    <property type="evidence" value="ECO:0000314"/>
    <property type="project" value="FlyBase"/>
</dbReference>
<dbReference type="GO" id="GO:0015986">
    <property type="term" value="P:proton motive force-driven ATP synthesis"/>
    <property type="evidence" value="ECO:0000250"/>
    <property type="project" value="FlyBase"/>
</dbReference>
<dbReference type="GO" id="GO:0042776">
    <property type="term" value="P:proton motive force-driven mitochondrial ATP synthesis"/>
    <property type="evidence" value="ECO:0000318"/>
    <property type="project" value="GO_Central"/>
</dbReference>
<dbReference type="GO" id="GO:1902600">
    <property type="term" value="P:proton transmembrane transport"/>
    <property type="evidence" value="ECO:0000250"/>
    <property type="project" value="FlyBase"/>
</dbReference>
<dbReference type="GO" id="GO:0006979">
    <property type="term" value="P:response to oxidative stress"/>
    <property type="evidence" value="ECO:0000315"/>
    <property type="project" value="FlyBase"/>
</dbReference>
<dbReference type="CDD" id="cd12153">
    <property type="entry name" value="F1-ATPase_epsilon"/>
    <property type="match status" value="1"/>
</dbReference>
<dbReference type="FunFam" id="1.10.1620.20:FF:000005">
    <property type="entry name" value="Uncharacterized protein, isoform A"/>
    <property type="match status" value="1"/>
</dbReference>
<dbReference type="Gene3D" id="1.10.1620.20">
    <property type="entry name" value="ATP synthase, F1 complex, epsilon subunit superfamily, mitochondrial"/>
    <property type="match status" value="1"/>
</dbReference>
<dbReference type="InterPro" id="IPR006721">
    <property type="entry name" value="ATP_synth_F1_esu_mt"/>
</dbReference>
<dbReference type="InterPro" id="IPR036742">
    <property type="entry name" value="ATP_synth_F1_esu_sf_mt"/>
</dbReference>
<dbReference type="PANTHER" id="PTHR12448">
    <property type="entry name" value="ATP SYNTHASE EPSILON CHAIN, MITOCHONDRIAL"/>
    <property type="match status" value="1"/>
</dbReference>
<dbReference type="PANTHER" id="PTHR12448:SF0">
    <property type="entry name" value="ATP SYNTHASE SUBUNIT EPSILON, MITOCHONDRIAL"/>
    <property type="match status" value="1"/>
</dbReference>
<dbReference type="Pfam" id="PF04627">
    <property type="entry name" value="ATP-synt_Eps"/>
    <property type="match status" value="1"/>
</dbReference>
<dbReference type="SUPFAM" id="SSF48690">
    <property type="entry name" value="Epsilon subunit of mitochondrial F1F0-ATP synthase"/>
    <property type="match status" value="1"/>
</dbReference>
<name>SUN_DROME</name>
<organism evidence="9">
    <name type="scientific">Drosophila melanogaster</name>
    <name type="common">Fruit fly</name>
    <dbReference type="NCBI Taxonomy" id="7227"/>
    <lineage>
        <taxon>Eukaryota</taxon>
        <taxon>Metazoa</taxon>
        <taxon>Ecdysozoa</taxon>
        <taxon>Arthropoda</taxon>
        <taxon>Hexapoda</taxon>
        <taxon>Insecta</taxon>
        <taxon>Pterygota</taxon>
        <taxon>Neoptera</taxon>
        <taxon>Endopterygota</taxon>
        <taxon>Diptera</taxon>
        <taxon>Brachycera</taxon>
        <taxon>Muscomorpha</taxon>
        <taxon>Ephydroidea</taxon>
        <taxon>Drosophilidae</taxon>
        <taxon>Drosophila</taxon>
        <taxon>Sophophora</taxon>
    </lineage>
</organism>
<feature type="chain" id="PRO_0000437960" description="Protein stunted">
    <location>
        <begin position="1"/>
        <end position="61"/>
    </location>
</feature>
<feature type="region of interest" description="Sufficient for mth activation" evidence="2">
    <location>
        <begin position="3"/>
        <end position="15"/>
    </location>
</feature>
<feature type="splice variant" id="VSP_058581" description="In isoform B.">
    <original>QRQTQSES</original>
    <variation>HERA</variation>
    <location>
        <begin position="54"/>
        <end position="61"/>
    </location>
</feature>
<feature type="mutagenesis site" description="Abolishes ability to activate mth." evidence="2">
    <original>A</original>
    <variation>S</variation>
    <location>
        <position position="3"/>
    </location>
</feature>
<feature type="mutagenesis site" description="Abolishes ability to activate mth." evidence="2">
    <original>W</original>
    <variation>A</variation>
    <location>
        <position position="4"/>
    </location>
</feature>
<feature type="mutagenesis site" description="Strongly reduces ability to activate mth." evidence="2">
    <original>A</original>
    <variation>S</variation>
    <location>
        <position position="6"/>
    </location>
</feature>
<protein>
    <recommendedName>
        <fullName evidence="3">Protein stunted</fullName>
    </recommendedName>
</protein>
<evidence type="ECO:0000269" key="1">
    <source>
    </source>
</evidence>
<evidence type="ECO:0000269" key="2">
    <source>
    </source>
</evidence>
<evidence type="ECO:0000305" key="3"/>
<evidence type="ECO:0000312" key="4">
    <source>
        <dbReference type="EMBL" id="AAL48780.1"/>
    </source>
</evidence>
<evidence type="ECO:0000312" key="5">
    <source>
        <dbReference type="EMBL" id="AAL49366.1"/>
    </source>
</evidence>
<evidence type="ECO:0000312" key="6">
    <source>
        <dbReference type="EMBL" id="ACV82452.1"/>
    </source>
</evidence>
<evidence type="ECO:0000312" key="7">
    <source>
        <dbReference type="EMBL" id="ANY27747.1"/>
    </source>
</evidence>
<evidence type="ECO:0000312" key="8">
    <source>
        <dbReference type="FlyBase" id="FBgn0014391"/>
    </source>
</evidence>
<evidence type="ECO:0000312" key="9">
    <source>
        <dbReference type="Proteomes" id="UP000000803"/>
    </source>
</evidence>
<comment type="function">
    <text evidence="1 2">Activates the G-protein coupled receptor mth in vitro, leading to increased intracellular calcium ion levels.</text>
</comment>
<comment type="interaction">
    <interactant intactId="EBI-156807">
        <id>Q9VXN2</id>
    </interactant>
    <interactant intactId="EBI-137218">
        <id>Q9W2X6</id>
        <label>ATPsyndelta</label>
    </interactant>
    <organismsDiffer>false</organismsDiffer>
    <experiments>3</experiments>
</comment>
<comment type="alternative products">
    <event type="alternative splicing"/>
    <isoform>
        <id>Q9VXN2-1</id>
        <name evidence="8">A</name>
        <sequence type="displayed"/>
    </isoform>
    <isoform>
        <id>Q9VXN2-2</id>
        <name evidence="8">B</name>
        <sequence type="described" ref="VSP_058581"/>
    </isoform>
</comment>
<comment type="disruption phenotype">
    <text evidence="1">Embryonic lethal. Heterozygotes show increased lifespan and enhanced resistance to oxidative stress. ATP levels are normal.</text>
</comment>
<comment type="similarity">
    <text evidence="3">Belongs to the eukaryotic ATPase epsilon family.</text>
</comment>
<comment type="caution">
    <text evidence="1">Although related to the eukaryotic ATPase epsilon family, there is no evidence for a function in the ATP synthase complex.</text>
</comment>